<comment type="function">
    <text evidence="4 5 7">Plays a negative role in rice basal defense responses to the bacterial blight pathogen Xanthomomas oryzae pv. oryzae (Xoo). May function in both positive and negative regulation of rice defense genes. Binds DNA in vitro (PubMed:16045470). Acts as a transcriptional activator when bound to NPR1/NH1 in vitro (PubMed:22353606). Binds to the promoter sequence of CRK10 in vitro (PubMed:27176732).</text>
</comment>
<comment type="subunit">
    <text evidence="6">Interacts with NPR1/NH1 and NPR3/NH3.</text>
</comment>
<comment type="subcellular location">
    <subcellularLocation>
        <location evidence="1">Nucleus</location>
    </subcellularLocation>
</comment>
<comment type="miscellaneous">
    <text evidence="4">Plants silencing TGA2.1 display increased tolerance to the bacterial blight pathogen Xanthomomas oryzae pv. oryzae, are dwarf, and present altered expression of pathogenesis-related (PR) genes.</text>
</comment>
<comment type="similarity">
    <text evidence="10">Belongs to the bZIP family.</text>
</comment>
<protein>
    <recommendedName>
        <fullName evidence="10">Transcription factor TGA2.1</fullName>
    </recommendedName>
    <alternativeName>
        <fullName evidence="11">OsNIF2</fullName>
    </alternativeName>
    <alternativeName>
        <fullName evidence="8">bZIP transcription factor 63</fullName>
        <shortName evidence="8">OsbZIP63</shortName>
    </alternativeName>
</protein>
<reference key="1">
    <citation type="journal article" date="2009" name="Plant Physiol.">
        <title>GRASSIUS: a platform for comparative regulatory genomics across the grasses.</title>
        <authorList>
            <person name="Yilmaz A."/>
            <person name="Nishiyama M.Y."/>
            <person name="Fuentes B.G."/>
            <person name="Souza G.M."/>
            <person name="Janies D."/>
            <person name="Gray J."/>
            <person name="Grotewold E."/>
        </authorList>
    </citation>
    <scope>NUCLEOTIDE SEQUENCE [MRNA]</scope>
    <source>
        <strain>cv. Nipponbare</strain>
    </source>
</reference>
<reference key="2">
    <citation type="submission" date="2001-11" db="EMBL/GenBank/DDBJ databases">
        <title>cDNA cloning of bZIP transcription factors from rice.</title>
        <authorList>
            <person name="Yokoyama T."/>
            <person name="Motoyama T."/>
            <person name="Yoneyama K."/>
            <person name="Yamaguchi I."/>
        </authorList>
    </citation>
    <scope>NUCLEOTIDE SEQUENCE [MRNA]</scope>
</reference>
<reference key="3">
    <citation type="journal article" date="2005" name="Nature">
        <title>The map-based sequence of the rice genome.</title>
        <authorList>
            <consortium name="International rice genome sequencing project (IRGSP)"/>
        </authorList>
    </citation>
    <scope>NUCLEOTIDE SEQUENCE [LARGE SCALE GENOMIC DNA]</scope>
    <source>
        <strain>cv. Nipponbare</strain>
    </source>
</reference>
<reference key="4">
    <citation type="journal article" date="2008" name="Nucleic Acids Res.">
        <title>The rice annotation project database (RAP-DB): 2008 update.</title>
        <authorList>
            <consortium name="The rice annotation project (RAP)"/>
        </authorList>
    </citation>
    <scope>GENOME REANNOTATION</scope>
    <source>
        <strain>cv. Nipponbare</strain>
    </source>
</reference>
<reference key="5">
    <citation type="journal article" date="2013" name="Rice">
        <title>Improvement of the Oryza sativa Nipponbare reference genome using next generation sequence and optical map data.</title>
        <authorList>
            <person name="Kawahara Y."/>
            <person name="de la Bastide M."/>
            <person name="Hamilton J.P."/>
            <person name="Kanamori H."/>
            <person name="McCombie W.R."/>
            <person name="Ouyang S."/>
            <person name="Schwartz D.C."/>
            <person name="Tanaka T."/>
            <person name="Wu J."/>
            <person name="Zhou S."/>
            <person name="Childs K.L."/>
            <person name="Davidson R.M."/>
            <person name="Lin H."/>
            <person name="Quesada-Ocampo L."/>
            <person name="Vaillancourt B."/>
            <person name="Sakai H."/>
            <person name="Lee S.S."/>
            <person name="Kim J."/>
            <person name="Numa H."/>
            <person name="Itoh T."/>
            <person name="Buell C.R."/>
            <person name="Matsumoto T."/>
        </authorList>
    </citation>
    <scope>GENOME REANNOTATION</scope>
    <source>
        <strain>cv. Nipponbare</strain>
    </source>
</reference>
<reference key="6">
    <citation type="journal article" date="2005" name="PLoS Biol.">
        <title>The genomes of Oryza sativa: a history of duplications.</title>
        <authorList>
            <person name="Yu J."/>
            <person name="Wang J."/>
            <person name="Lin W."/>
            <person name="Li S."/>
            <person name="Li H."/>
            <person name="Zhou J."/>
            <person name="Ni P."/>
            <person name="Dong W."/>
            <person name="Hu S."/>
            <person name="Zeng C."/>
            <person name="Zhang J."/>
            <person name="Zhang Y."/>
            <person name="Li R."/>
            <person name="Xu Z."/>
            <person name="Li S."/>
            <person name="Li X."/>
            <person name="Zheng H."/>
            <person name="Cong L."/>
            <person name="Lin L."/>
            <person name="Yin J."/>
            <person name="Geng J."/>
            <person name="Li G."/>
            <person name="Shi J."/>
            <person name="Liu J."/>
            <person name="Lv H."/>
            <person name="Li J."/>
            <person name="Wang J."/>
            <person name="Deng Y."/>
            <person name="Ran L."/>
            <person name="Shi X."/>
            <person name="Wang X."/>
            <person name="Wu Q."/>
            <person name="Li C."/>
            <person name="Ren X."/>
            <person name="Wang J."/>
            <person name="Wang X."/>
            <person name="Li D."/>
            <person name="Liu D."/>
            <person name="Zhang X."/>
            <person name="Ji Z."/>
            <person name="Zhao W."/>
            <person name="Sun Y."/>
            <person name="Zhang Z."/>
            <person name="Bao J."/>
            <person name="Han Y."/>
            <person name="Dong L."/>
            <person name="Ji J."/>
            <person name="Chen P."/>
            <person name="Wu S."/>
            <person name="Liu J."/>
            <person name="Xiao Y."/>
            <person name="Bu D."/>
            <person name="Tan J."/>
            <person name="Yang L."/>
            <person name="Ye C."/>
            <person name="Zhang J."/>
            <person name="Xu J."/>
            <person name="Zhou Y."/>
            <person name="Yu Y."/>
            <person name="Zhang B."/>
            <person name="Zhuang S."/>
            <person name="Wei H."/>
            <person name="Liu B."/>
            <person name="Lei M."/>
            <person name="Yu H."/>
            <person name="Li Y."/>
            <person name="Xu H."/>
            <person name="Wei S."/>
            <person name="He X."/>
            <person name="Fang L."/>
            <person name="Zhang Z."/>
            <person name="Zhang Y."/>
            <person name="Huang X."/>
            <person name="Su Z."/>
            <person name="Tong W."/>
            <person name="Li J."/>
            <person name="Tong Z."/>
            <person name="Li S."/>
            <person name="Ye J."/>
            <person name="Wang L."/>
            <person name="Fang L."/>
            <person name="Lei T."/>
            <person name="Chen C.-S."/>
            <person name="Chen H.-C."/>
            <person name="Xu Z."/>
            <person name="Li H."/>
            <person name="Huang H."/>
            <person name="Zhang F."/>
            <person name="Xu H."/>
            <person name="Li N."/>
            <person name="Zhao C."/>
            <person name="Li S."/>
            <person name="Dong L."/>
            <person name="Huang Y."/>
            <person name="Li L."/>
            <person name="Xi Y."/>
            <person name="Qi Q."/>
            <person name="Li W."/>
            <person name="Zhang B."/>
            <person name="Hu W."/>
            <person name="Zhang Y."/>
            <person name="Tian X."/>
            <person name="Jiao Y."/>
            <person name="Liang X."/>
            <person name="Jin J."/>
            <person name="Gao L."/>
            <person name="Zheng W."/>
            <person name="Hao B."/>
            <person name="Liu S.-M."/>
            <person name="Wang W."/>
            <person name="Yuan L."/>
            <person name="Cao M."/>
            <person name="McDermott J."/>
            <person name="Samudrala R."/>
            <person name="Wang J."/>
            <person name="Wong G.K.-S."/>
            <person name="Yang H."/>
        </authorList>
    </citation>
    <scope>NUCLEOTIDE SEQUENCE [LARGE SCALE GENOMIC DNA]</scope>
    <source>
        <strain>cv. Nipponbare</strain>
    </source>
</reference>
<reference key="7">
    <citation type="journal article" date="2003" name="Science">
        <title>Collection, mapping, and annotation of over 28,000 cDNA clones from japonica rice.</title>
        <authorList>
            <consortium name="The rice full-length cDNA consortium"/>
        </authorList>
    </citation>
    <scope>NUCLEOTIDE SEQUENCE [LARGE SCALE MRNA]</scope>
    <source>
        <strain>cv. Nipponbare</strain>
    </source>
</reference>
<reference key="8">
    <citation type="journal article" date="2005" name="Plant J.">
        <title>Alteration of TGA factor activity in rice results in enhanced tolerance to Xanthomonas oryzae pv. oryzae.</title>
        <authorList>
            <person name="Fitzgerald H.A."/>
            <person name="Canlas P.E."/>
            <person name="Chern M.S."/>
            <person name="Ronald P.C."/>
        </authorList>
    </citation>
    <scope>FUNCTION</scope>
    <scope>MUTAGENESIS OF 61-ALA-ALA-62</scope>
</reference>
<reference key="9">
    <citation type="journal article" date="2008" name="Plant Physiol.">
        <title>Genomic survey and gene expression analysis of the basic leucine zipper transcription factor family in rice.</title>
        <authorList>
            <person name="Nijhawan A."/>
            <person name="Jain M."/>
            <person name="Tyagi A.K."/>
            <person name="Khurana J.P."/>
        </authorList>
    </citation>
    <scope>GENE FAMILY</scope>
    <scope>NOMENCLATURE</scope>
</reference>
<reference key="10">
    <citation type="journal article" date="2012" name="Plant Methods">
        <title>A rice transient assay system identifies a novel domain in NRR required for interaction with NH1/OsNPR1 and inhibition of NH1-mediated transcriptional activation.</title>
        <authorList>
            <person name="Chern M."/>
            <person name="Bai W."/>
            <person name="Sze-To W.H."/>
            <person name="Canlas P.E."/>
            <person name="Bartley L.E."/>
            <person name="Ronald P.C."/>
        </authorList>
    </citation>
    <scope>FUNCTION</scope>
</reference>
<reference key="11">
    <citation type="journal article" date="2014" name="BMC Genomics">
        <title>Interaction specificity and coexpression of rice NPR1 homologs 1 and 3 (NH1 and NH3), TGA transcription factors and negative regulator of resistance (NRR) proteins.</title>
        <authorList>
            <person name="Chern M."/>
            <person name="Bai W."/>
            <person name="Ruan D."/>
            <person name="Oh T."/>
            <person name="Chen X."/>
            <person name="Ronald P.C."/>
        </authorList>
    </citation>
    <scope>INTERACTION WITH NPR1/NH1 AND NPR3/NH3</scope>
</reference>
<reference key="12">
    <citation type="journal article" date="2016" name="PLoS Genet.">
        <title>A genetic screen identifies a requirement for cysteine-rich-receptor-like kinases in rice NH1 (OsNPR1)-mediated immunity.</title>
        <authorList>
            <person name="Chern M."/>
            <person name="Xu Q."/>
            <person name="Bart R.S."/>
            <person name="Bai W."/>
            <person name="Ruan D."/>
            <person name="Sze-To W.H."/>
            <person name="Canlas P.E."/>
            <person name="Jain R."/>
            <person name="Chen X."/>
            <person name="Ronald P.C."/>
        </authorList>
    </citation>
    <scope>FUNCTION</scope>
</reference>
<accession>Q7X993</accession>
<accession>Q8W5R9</accession>
<organism>
    <name type="scientific">Oryza sativa subsp. japonica</name>
    <name type="common">Rice</name>
    <dbReference type="NCBI Taxonomy" id="39947"/>
    <lineage>
        <taxon>Eukaryota</taxon>
        <taxon>Viridiplantae</taxon>
        <taxon>Streptophyta</taxon>
        <taxon>Embryophyta</taxon>
        <taxon>Tracheophyta</taxon>
        <taxon>Spermatophyta</taxon>
        <taxon>Magnoliopsida</taxon>
        <taxon>Liliopsida</taxon>
        <taxon>Poales</taxon>
        <taxon>Poaceae</taxon>
        <taxon>BOP clade</taxon>
        <taxon>Oryzoideae</taxon>
        <taxon>Oryzeae</taxon>
        <taxon>Oryzinae</taxon>
        <taxon>Oryza</taxon>
        <taxon>Oryza sativa</taxon>
    </lineage>
</organism>
<keyword id="KW-0010">Activator</keyword>
<keyword id="KW-0238">DNA-binding</keyword>
<keyword id="KW-0539">Nucleus</keyword>
<keyword id="KW-0611">Plant defense</keyword>
<keyword id="KW-1185">Reference proteome</keyword>
<keyword id="KW-0804">Transcription</keyword>
<keyword id="KW-0805">Transcription regulation</keyword>
<feature type="chain" id="PRO_0000437012" description="Transcription factor TGA2.1">
    <location>
        <begin position="1"/>
        <end position="334"/>
    </location>
</feature>
<feature type="domain" description="bZIP" evidence="1">
    <location>
        <begin position="48"/>
        <end position="92"/>
    </location>
</feature>
<feature type="domain" description="DOG1" evidence="2">
    <location>
        <begin position="115"/>
        <end position="331"/>
    </location>
</feature>
<feature type="region of interest" description="Disordered" evidence="3">
    <location>
        <begin position="1"/>
        <end position="49"/>
    </location>
</feature>
<feature type="region of interest" description="Basic motif" evidence="1">
    <location>
        <begin position="50"/>
        <end position="70"/>
    </location>
</feature>
<feature type="region of interest" description="Leucine-zipper" evidence="1">
    <location>
        <begin position="76"/>
        <end position="90"/>
    </location>
</feature>
<feature type="compositionally biased region" description="Polar residues" evidence="3">
    <location>
        <begin position="1"/>
        <end position="13"/>
    </location>
</feature>
<feature type="compositionally biased region" description="Basic and acidic residues" evidence="3">
    <location>
        <begin position="38"/>
        <end position="49"/>
    </location>
</feature>
<feature type="mutagenesis site" description="Loss of DNA binding capacity." evidence="4">
    <original>AA</original>
    <variation>PP</variation>
    <location>
        <begin position="61"/>
        <end position="62"/>
    </location>
</feature>
<proteinExistence type="evidence at protein level"/>
<evidence type="ECO:0000255" key="1">
    <source>
        <dbReference type="PROSITE-ProRule" id="PRU00978"/>
    </source>
</evidence>
<evidence type="ECO:0000255" key="2">
    <source>
        <dbReference type="PROSITE-ProRule" id="PRU01147"/>
    </source>
</evidence>
<evidence type="ECO:0000256" key="3">
    <source>
        <dbReference type="SAM" id="MobiDB-lite"/>
    </source>
</evidence>
<evidence type="ECO:0000269" key="4">
    <source>
    </source>
</evidence>
<evidence type="ECO:0000269" key="5">
    <source>
    </source>
</evidence>
<evidence type="ECO:0000269" key="6">
    <source>
    </source>
</evidence>
<evidence type="ECO:0000269" key="7">
    <source>
    </source>
</evidence>
<evidence type="ECO:0000303" key="8">
    <source>
    </source>
</evidence>
<evidence type="ECO:0000303" key="9">
    <source>
    </source>
</evidence>
<evidence type="ECO:0000305" key="10"/>
<evidence type="ECO:0000312" key="11">
    <source>
        <dbReference type="EMBL" id="BAB72062.1"/>
    </source>
</evidence>
<evidence type="ECO:0000312" key="12">
    <source>
        <dbReference type="EMBL" id="BAC79596.1"/>
    </source>
</evidence>
<evidence type="ECO:0000312" key="13">
    <source>
        <dbReference type="EMBL" id="BAD30297.1"/>
    </source>
</evidence>
<evidence type="ECO:0000312" key="14">
    <source>
        <dbReference type="EMBL" id="BAF22609.1"/>
    </source>
</evidence>
<evidence type="ECO:0000312" key="15">
    <source>
        <dbReference type="EMBL" id="EEE67849.1"/>
    </source>
</evidence>
<dbReference type="EMBL" id="HQ858807">
    <property type="protein sequence ID" value="ADX60219.1"/>
    <property type="molecule type" value="mRNA"/>
</dbReference>
<dbReference type="EMBL" id="AB051295">
    <property type="protein sequence ID" value="BAB72062.1"/>
    <property type="molecule type" value="mRNA"/>
</dbReference>
<dbReference type="EMBL" id="AP003813">
    <property type="protein sequence ID" value="BAD30297.1"/>
    <property type="molecule type" value="Genomic_DNA"/>
</dbReference>
<dbReference type="EMBL" id="AP003816">
    <property type="protein sequence ID" value="BAC79596.1"/>
    <property type="molecule type" value="Genomic_DNA"/>
</dbReference>
<dbReference type="EMBL" id="AP008213">
    <property type="protein sequence ID" value="BAF22609.1"/>
    <property type="molecule type" value="Genomic_DNA"/>
</dbReference>
<dbReference type="EMBL" id="AP014963">
    <property type="protein sequence ID" value="BAT03308.1"/>
    <property type="molecule type" value="Genomic_DNA"/>
</dbReference>
<dbReference type="EMBL" id="CM000144">
    <property type="protein sequence ID" value="EEE67849.1"/>
    <property type="molecule type" value="Genomic_DNA"/>
</dbReference>
<dbReference type="EMBL" id="AK100440">
    <property type="protein sequence ID" value="BAG94609.1"/>
    <property type="molecule type" value="mRNA"/>
</dbReference>
<dbReference type="RefSeq" id="XP_015647505.1">
    <property type="nucleotide sequence ID" value="XM_015792019.1"/>
</dbReference>
<dbReference type="RefSeq" id="XP_015647506.1">
    <property type="nucleotide sequence ID" value="XM_015792020.1"/>
</dbReference>
<dbReference type="SMR" id="Q7X993"/>
<dbReference type="STRING" id="39947.Q7X993"/>
<dbReference type="PaxDb" id="39947-Q7X993"/>
<dbReference type="EnsemblPlants" id="Os07t0687700-01">
    <property type="protein sequence ID" value="Os07t0687700-01"/>
    <property type="gene ID" value="Os07g0687700"/>
</dbReference>
<dbReference type="Gramene" id="Os07t0687700-01">
    <property type="protein sequence ID" value="Os07t0687700-01"/>
    <property type="gene ID" value="Os07g0687700"/>
</dbReference>
<dbReference type="KEGG" id="dosa:Os07g0687700"/>
<dbReference type="eggNOG" id="ENOG502QU32">
    <property type="taxonomic scope" value="Eukaryota"/>
</dbReference>
<dbReference type="HOGENOM" id="CLU_024782_1_1_1"/>
<dbReference type="InParanoid" id="Q7X993"/>
<dbReference type="OMA" id="SKLDVFH"/>
<dbReference type="OrthoDB" id="2015618at2759"/>
<dbReference type="PlantReactome" id="R-OSA-6788019">
    <property type="pathway name" value="Salicylic acid signaling"/>
</dbReference>
<dbReference type="Proteomes" id="UP000000763">
    <property type="component" value="Chromosome 7"/>
</dbReference>
<dbReference type="Proteomes" id="UP000007752">
    <property type="component" value="Chromosome 7"/>
</dbReference>
<dbReference type="Proteomes" id="UP000059680">
    <property type="component" value="Chromosome 7"/>
</dbReference>
<dbReference type="GO" id="GO:0005634">
    <property type="term" value="C:nucleus"/>
    <property type="evidence" value="ECO:0007669"/>
    <property type="project" value="UniProtKB-SubCell"/>
</dbReference>
<dbReference type="GO" id="GO:0003677">
    <property type="term" value="F:DNA binding"/>
    <property type="evidence" value="ECO:0000314"/>
    <property type="project" value="UniProtKB"/>
</dbReference>
<dbReference type="GO" id="GO:0003700">
    <property type="term" value="F:DNA-binding transcription factor activity"/>
    <property type="evidence" value="ECO:0007669"/>
    <property type="project" value="InterPro"/>
</dbReference>
<dbReference type="GO" id="GO:0043565">
    <property type="term" value="F:sequence-specific DNA binding"/>
    <property type="evidence" value="ECO:0007669"/>
    <property type="project" value="InterPro"/>
</dbReference>
<dbReference type="GO" id="GO:0042742">
    <property type="term" value="P:defense response to bacterium"/>
    <property type="evidence" value="ECO:0000315"/>
    <property type="project" value="UniProtKB"/>
</dbReference>
<dbReference type="GO" id="GO:0006351">
    <property type="term" value="P:DNA-templated transcription"/>
    <property type="evidence" value="ECO:0007669"/>
    <property type="project" value="InterPro"/>
</dbReference>
<dbReference type="GO" id="GO:0045893">
    <property type="term" value="P:positive regulation of DNA-templated transcription"/>
    <property type="evidence" value="ECO:0000314"/>
    <property type="project" value="UniProtKB"/>
</dbReference>
<dbReference type="FunFam" id="1.20.5.170:FF:000019">
    <property type="entry name" value="BZIP family transcription factor"/>
    <property type="match status" value="1"/>
</dbReference>
<dbReference type="Gene3D" id="1.20.5.170">
    <property type="match status" value="1"/>
</dbReference>
<dbReference type="InterPro" id="IPR004827">
    <property type="entry name" value="bZIP"/>
</dbReference>
<dbReference type="InterPro" id="IPR046347">
    <property type="entry name" value="bZIP_sf"/>
</dbReference>
<dbReference type="InterPro" id="IPR025422">
    <property type="entry name" value="TGA_domain"/>
</dbReference>
<dbReference type="PANTHER" id="PTHR45693:SF71">
    <property type="entry name" value="TRANSCRIPTION FACTOR TGA2.1"/>
    <property type="match status" value="1"/>
</dbReference>
<dbReference type="PANTHER" id="PTHR45693">
    <property type="entry name" value="TRANSCRIPTION FACTOR TGA9"/>
    <property type="match status" value="1"/>
</dbReference>
<dbReference type="Pfam" id="PF00170">
    <property type="entry name" value="bZIP_1"/>
    <property type="match status" value="1"/>
</dbReference>
<dbReference type="Pfam" id="PF14144">
    <property type="entry name" value="DOG1"/>
    <property type="match status" value="1"/>
</dbReference>
<dbReference type="SMART" id="SM00338">
    <property type="entry name" value="BRLZ"/>
    <property type="match status" value="1"/>
</dbReference>
<dbReference type="SUPFAM" id="SSF57959">
    <property type="entry name" value="Leucine zipper domain"/>
    <property type="match status" value="1"/>
</dbReference>
<dbReference type="PROSITE" id="PS50217">
    <property type="entry name" value="BZIP"/>
    <property type="match status" value="1"/>
</dbReference>
<dbReference type="PROSITE" id="PS00036">
    <property type="entry name" value="BZIP_BASIC"/>
    <property type="match status" value="1"/>
</dbReference>
<dbReference type="PROSITE" id="PS51806">
    <property type="entry name" value="DOG1"/>
    <property type="match status" value="1"/>
</dbReference>
<sequence length="334" mass="37215">MADASSRTDTSIVVDNDDKNHQLENGHSGAVMASNSSDRSDRSDKLMDQKTIRRLAQNREAARKSRLRKKAYVQQLESSKLKLAQLEQELQKARQQGIFISSSGDQTHAMSGNGALTFDLEYTRWLEEQNKQINELRTAVNAHASDSDLRLIVDGIMAHYDEVFKVKGVAAKADVFHILSGMWKTPAERCFLWLGGFRPSELLKLLANHLEPLTEQQLLGLNNLQESSQQAEDALSQGMEALQQSLADTLAGSLGSSGSSGNVANYMGQMAMAMGKLGTLENFLCQADNLRQQTLHQMQRILTIRQASRALLAIHDYFSRLRALSSLWLARPRE</sequence>
<name>TGA21_ORYSJ</name>
<gene>
    <name evidence="9" type="primary">TGA2.1</name>
    <name evidence="14" type="ordered locus">Os07g0687700</name>
    <name evidence="10" type="ordered locus">LOC_Os07g48820</name>
    <name evidence="13" type="ORF">OJ1150_E04.124</name>
    <name evidence="12" type="ORF">OJ1165_F02.101</name>
    <name evidence="15" type="ORF">OsJ_25648</name>
</gene>